<organism>
    <name type="scientific">Escherichia coli (strain K12)</name>
    <dbReference type="NCBI Taxonomy" id="83333"/>
    <lineage>
        <taxon>Bacteria</taxon>
        <taxon>Pseudomonadati</taxon>
        <taxon>Pseudomonadota</taxon>
        <taxon>Gammaproteobacteria</taxon>
        <taxon>Enterobacterales</taxon>
        <taxon>Enterobacteriaceae</taxon>
        <taxon>Escherichia</taxon>
    </lineage>
</organism>
<name>HYBD_ECOLI</name>
<sequence length="164" mass="17751">MRILVLGVGNILLTDEAIGVRIVEALEQRYILPDYVEILDGGTAGMELLGDMANRDHLIIADAIVSKKNAPGTMMILRDEEVPALFTNKISPHQLGLADVLSALRFTGEFPKKLTLVGVIPESLEPHIGLTPTVEAMIEPALEQVLAALRESGVEAIPREAIHD</sequence>
<protein>
    <recommendedName>
        <fullName>Hydrogenase 2 maturation protease</fullName>
        <ecNumber>3.4.23.-</ecNumber>
    </recommendedName>
</protein>
<comment type="function">
    <text>Protease involved in the C-terminal processing of HybC, the large subunit of hydrogenase 2. Specifically cleaves off a 15 amino acid peptide from the C-terminus of the precursor of HybC.</text>
</comment>
<comment type="cofactor">
    <cofactor>
        <name>Ni(2+)</name>
        <dbReference type="ChEBI" id="CHEBI:49786"/>
    </cofactor>
</comment>
<comment type="similarity">
    <text evidence="1">Belongs to the peptidase A31 family.</text>
</comment>
<reference key="1">
    <citation type="journal article" date="1994" name="J. Bacteriol.">
        <title>Cloning, sequencing, and mutational analysis of the hyb operon encoding Escherichia coli hydrogenase 2.</title>
        <authorList>
            <person name="Menon N.K."/>
            <person name="Chatelus C.Y."/>
            <person name="Dervartanian M."/>
            <person name="Wendt J.C."/>
            <person name="Shanmugam K.T."/>
            <person name="Peck H.D. Jr."/>
            <person name="Przybyla A.E."/>
        </authorList>
    </citation>
    <scope>NUCLEOTIDE SEQUENCE [GENOMIC DNA]</scope>
    <source>
        <strain>K12 / TG1</strain>
    </source>
</reference>
<reference key="2">
    <citation type="journal article" date="1997" name="Science">
        <title>The complete genome sequence of Escherichia coli K-12.</title>
        <authorList>
            <person name="Blattner F.R."/>
            <person name="Plunkett G. III"/>
            <person name="Bloch C.A."/>
            <person name="Perna N.T."/>
            <person name="Burland V."/>
            <person name="Riley M."/>
            <person name="Collado-Vides J."/>
            <person name="Glasner J.D."/>
            <person name="Rode C.K."/>
            <person name="Mayhew G.F."/>
            <person name="Gregor J."/>
            <person name="Davis N.W."/>
            <person name="Kirkpatrick H.A."/>
            <person name="Goeden M.A."/>
            <person name="Rose D.J."/>
            <person name="Mau B."/>
            <person name="Shao Y."/>
        </authorList>
    </citation>
    <scope>NUCLEOTIDE SEQUENCE [LARGE SCALE GENOMIC DNA]</scope>
    <source>
        <strain>K12 / MG1655 / ATCC 47076</strain>
    </source>
</reference>
<reference key="3">
    <citation type="journal article" date="2006" name="Mol. Syst. Biol.">
        <title>Highly accurate genome sequences of Escherichia coli K-12 strains MG1655 and W3110.</title>
        <authorList>
            <person name="Hayashi K."/>
            <person name="Morooka N."/>
            <person name="Yamamoto Y."/>
            <person name="Fujita K."/>
            <person name="Isono K."/>
            <person name="Choi S."/>
            <person name="Ohtsubo E."/>
            <person name="Baba T."/>
            <person name="Wanner B.L."/>
            <person name="Mori H."/>
            <person name="Horiuchi T."/>
        </authorList>
    </citation>
    <scope>NUCLEOTIDE SEQUENCE [LARGE SCALE GENOMIC DNA]</scope>
    <source>
        <strain>K12 / W3110 / ATCC 27325 / DSM 5911</strain>
    </source>
</reference>
<reference key="4">
    <citation type="journal article" date="1999" name="J. Mol. Biol.">
        <title>Crystal structure of the hydrogenase maturating endopeptidase HYBD from Escherichia coli.</title>
        <authorList>
            <person name="Fritsche E."/>
            <person name="Paschos A."/>
            <person name="Beisel H.-G."/>
            <person name="Boeck A."/>
            <person name="Huber R."/>
        </authorList>
    </citation>
    <scope>X-RAY CRYSTALLOGRAPHY (2.2 ANGSTROMS)</scope>
</reference>
<keyword id="KW-0002">3D-structure</keyword>
<keyword id="KW-0064">Aspartyl protease</keyword>
<keyword id="KW-0378">Hydrolase</keyword>
<keyword id="KW-0479">Metal-binding</keyword>
<keyword id="KW-0533">Nickel</keyword>
<keyword id="KW-0645">Protease</keyword>
<keyword id="KW-1185">Reference proteome</keyword>
<accession>P37182</accession>
<accession>Q2M9K2</accession>
<proteinExistence type="evidence at protein level"/>
<gene>
    <name type="primary">hybD</name>
    <name type="ordered locus">b2993</name>
    <name type="ordered locus">JW2961</name>
</gene>
<dbReference type="EC" id="3.4.23.-"/>
<dbReference type="EMBL" id="U09177">
    <property type="protein sequence ID" value="AAA21592.1"/>
    <property type="molecule type" value="Genomic_DNA"/>
</dbReference>
<dbReference type="EMBL" id="U28377">
    <property type="protein sequence ID" value="AAA69160.1"/>
    <property type="molecule type" value="Genomic_DNA"/>
</dbReference>
<dbReference type="EMBL" id="U00096">
    <property type="protein sequence ID" value="AAC76029.1"/>
    <property type="molecule type" value="Genomic_DNA"/>
</dbReference>
<dbReference type="EMBL" id="AP009048">
    <property type="protein sequence ID" value="BAE77054.1"/>
    <property type="molecule type" value="Genomic_DNA"/>
</dbReference>
<dbReference type="PIR" id="G65085">
    <property type="entry name" value="G65085"/>
</dbReference>
<dbReference type="RefSeq" id="NP_417467.1">
    <property type="nucleotide sequence ID" value="NC_000913.3"/>
</dbReference>
<dbReference type="RefSeq" id="WP_001221939.1">
    <property type="nucleotide sequence ID" value="NZ_SSZK01000023.1"/>
</dbReference>
<dbReference type="PDB" id="1CFZ">
    <property type="method" value="X-ray"/>
    <property type="resolution" value="2.20 A"/>
    <property type="chains" value="A/B/C/D/E/F=1-159"/>
</dbReference>
<dbReference type="PDBsum" id="1CFZ"/>
<dbReference type="SMR" id="P37182"/>
<dbReference type="BioGRID" id="4262374">
    <property type="interactions" value="60"/>
</dbReference>
<dbReference type="BioGRID" id="853231">
    <property type="interactions" value="1"/>
</dbReference>
<dbReference type="DIP" id="DIP-9967N"/>
<dbReference type="FunCoup" id="P37182">
    <property type="interactions" value="36"/>
</dbReference>
<dbReference type="IntAct" id="P37182">
    <property type="interactions" value="6"/>
</dbReference>
<dbReference type="STRING" id="511145.b2993"/>
<dbReference type="MEROPS" id="A31.001"/>
<dbReference type="TCDB" id="3.D.7.2.5">
    <property type="family name" value="the h2:heterodisulfide oxidoreductase (hho) family"/>
</dbReference>
<dbReference type="jPOST" id="P37182"/>
<dbReference type="PaxDb" id="511145-b2993"/>
<dbReference type="EnsemblBacteria" id="AAC76029">
    <property type="protein sequence ID" value="AAC76029"/>
    <property type="gene ID" value="b2993"/>
</dbReference>
<dbReference type="GeneID" id="948982"/>
<dbReference type="KEGG" id="ecj:JW2961"/>
<dbReference type="KEGG" id="eco:b2993"/>
<dbReference type="KEGG" id="ecoc:C3026_16370"/>
<dbReference type="PATRIC" id="fig|1411691.4.peg.3736"/>
<dbReference type="EchoBASE" id="EB1750"/>
<dbReference type="eggNOG" id="COG0680">
    <property type="taxonomic scope" value="Bacteria"/>
</dbReference>
<dbReference type="HOGENOM" id="CLU_099037_0_0_6"/>
<dbReference type="InParanoid" id="P37182"/>
<dbReference type="OMA" id="PHQLGLC"/>
<dbReference type="OrthoDB" id="9792731at2"/>
<dbReference type="PhylomeDB" id="P37182"/>
<dbReference type="BioCyc" id="EcoCyc:EG11802-MONOMER"/>
<dbReference type="BioCyc" id="MetaCyc:EG11802-MONOMER"/>
<dbReference type="BRENDA" id="3.4.23.B20">
    <property type="organism ID" value="2026"/>
</dbReference>
<dbReference type="EvolutionaryTrace" id="P37182"/>
<dbReference type="PRO" id="PR:P37182"/>
<dbReference type="Proteomes" id="UP000000625">
    <property type="component" value="Chromosome"/>
</dbReference>
<dbReference type="GO" id="GO:0004190">
    <property type="term" value="F:aspartic-type endopeptidase activity"/>
    <property type="evidence" value="ECO:0007669"/>
    <property type="project" value="UniProtKB-KW"/>
</dbReference>
<dbReference type="GO" id="GO:0004175">
    <property type="term" value="F:endopeptidase activity"/>
    <property type="evidence" value="ECO:0000314"/>
    <property type="project" value="EcoCyc"/>
</dbReference>
<dbReference type="GO" id="GO:0008047">
    <property type="term" value="F:enzyme activator activity"/>
    <property type="evidence" value="ECO:0007669"/>
    <property type="project" value="InterPro"/>
</dbReference>
<dbReference type="GO" id="GO:0046872">
    <property type="term" value="F:metal ion binding"/>
    <property type="evidence" value="ECO:0007669"/>
    <property type="project" value="UniProtKB-KW"/>
</dbReference>
<dbReference type="GO" id="GO:0016485">
    <property type="term" value="P:protein processing"/>
    <property type="evidence" value="ECO:0000314"/>
    <property type="project" value="EcoCyc"/>
</dbReference>
<dbReference type="CDD" id="cd06062">
    <property type="entry name" value="H2MP_MemB-H2up"/>
    <property type="match status" value="1"/>
</dbReference>
<dbReference type="FunFam" id="3.40.50.1450:FF:000001">
    <property type="entry name" value="Hydrogenase 2 maturation endopeptidase"/>
    <property type="match status" value="1"/>
</dbReference>
<dbReference type="Gene3D" id="3.40.50.1450">
    <property type="entry name" value="HybD-like"/>
    <property type="match status" value="1"/>
</dbReference>
<dbReference type="InterPro" id="IPR004419">
    <property type="entry name" value="Pept_A31_hyd_express"/>
</dbReference>
<dbReference type="InterPro" id="IPR023430">
    <property type="entry name" value="Pept_HybD-like_dom_sf"/>
</dbReference>
<dbReference type="InterPro" id="IPR000671">
    <property type="entry name" value="Peptidase_A31"/>
</dbReference>
<dbReference type="NCBIfam" id="TIGR00140">
    <property type="entry name" value="hupD"/>
    <property type="match status" value="1"/>
</dbReference>
<dbReference type="NCBIfam" id="TIGR00072">
    <property type="entry name" value="hydrog_prot"/>
    <property type="match status" value="1"/>
</dbReference>
<dbReference type="NCBIfam" id="NF007777">
    <property type="entry name" value="PRK10466.1"/>
    <property type="match status" value="1"/>
</dbReference>
<dbReference type="PANTHER" id="PTHR30302">
    <property type="entry name" value="HYDROGENASE 1 MATURATION PROTEASE"/>
    <property type="match status" value="1"/>
</dbReference>
<dbReference type="PANTHER" id="PTHR30302:SF1">
    <property type="entry name" value="HYDROGENASE 2 MATURATION PROTEASE"/>
    <property type="match status" value="1"/>
</dbReference>
<dbReference type="Pfam" id="PF01750">
    <property type="entry name" value="HycI"/>
    <property type="match status" value="1"/>
</dbReference>
<dbReference type="PRINTS" id="PR00446">
    <property type="entry name" value="HYDRGNUPTAKE"/>
</dbReference>
<dbReference type="SUPFAM" id="SSF53163">
    <property type="entry name" value="HybD-like"/>
    <property type="match status" value="1"/>
</dbReference>
<feature type="chain" id="PRO_0000201943" description="Hydrogenase 2 maturation protease">
    <location>
        <begin position="1"/>
        <end position="164"/>
    </location>
</feature>
<feature type="binding site">
    <location>
        <position position="16"/>
    </location>
    <ligand>
        <name>Ni(2+)</name>
        <dbReference type="ChEBI" id="CHEBI:49786"/>
    </ligand>
</feature>
<feature type="binding site">
    <location>
        <position position="62"/>
    </location>
    <ligand>
        <name>Ni(2+)</name>
        <dbReference type="ChEBI" id="CHEBI:49786"/>
    </ligand>
</feature>
<feature type="binding site">
    <location>
        <position position="93"/>
    </location>
    <ligand>
        <name>Ni(2+)</name>
        <dbReference type="ChEBI" id="CHEBI:49786"/>
    </ligand>
</feature>
<feature type="sequence conflict" description="In Ref. 1; AAA21592." evidence="1" ref="1">
    <original>EAIHD</original>
    <variation>SDS</variation>
    <location>
        <begin position="160"/>
        <end position="164"/>
    </location>
</feature>
<feature type="strand" evidence="2">
    <location>
        <begin position="3"/>
        <end position="9"/>
    </location>
</feature>
<feature type="helix" evidence="2">
    <location>
        <begin position="14"/>
        <end position="17"/>
    </location>
</feature>
<feature type="helix" evidence="2">
    <location>
        <begin position="18"/>
        <end position="29"/>
    </location>
</feature>
<feature type="strand" evidence="2">
    <location>
        <begin position="36"/>
        <end position="42"/>
    </location>
</feature>
<feature type="helix" evidence="2">
    <location>
        <begin position="46"/>
        <end position="48"/>
    </location>
</feature>
<feature type="helix" evidence="2">
    <location>
        <begin position="49"/>
        <end position="52"/>
    </location>
</feature>
<feature type="strand" evidence="2">
    <location>
        <begin position="56"/>
        <end position="63"/>
    </location>
</feature>
<feature type="strand" evidence="2">
    <location>
        <begin position="74"/>
        <end position="78"/>
    </location>
</feature>
<feature type="helix" evidence="2">
    <location>
        <begin position="81"/>
        <end position="86"/>
    </location>
</feature>
<feature type="helix" evidence="2">
    <location>
        <begin position="92"/>
        <end position="106"/>
    </location>
</feature>
<feature type="strand" evidence="2">
    <location>
        <begin position="112"/>
        <end position="119"/>
    </location>
</feature>
<feature type="strand" evidence="2">
    <location>
        <begin position="126"/>
        <end position="129"/>
    </location>
</feature>
<feature type="helix" evidence="2">
    <location>
        <begin position="132"/>
        <end position="135"/>
    </location>
</feature>
<feature type="helix" evidence="2">
    <location>
        <begin position="138"/>
        <end position="150"/>
    </location>
</feature>
<feature type="turn" evidence="2">
    <location>
        <begin position="151"/>
        <end position="153"/>
    </location>
</feature>
<evidence type="ECO:0000305" key="1"/>
<evidence type="ECO:0007829" key="2">
    <source>
        <dbReference type="PDB" id="1CFZ"/>
    </source>
</evidence>